<accession>B0CKN5</accession>
<sequence>MPKIGMEPLRRRELIDAAIRTIGQRGSLDVTVAQIAHEAGVSPALAHHYFGGKDKLILATMRHLLRELGRDLNAAIKQANTPHERIAAIIAVNFSAAQFAQETIAAWLTFYVHAQQSDDIKRLLRIYARRLHSNLVFALEQLTSRARANRIAEGAGAMIDGLYIRHALGADVPDAASAIALVEDYIAIQLSGQPSAEN</sequence>
<proteinExistence type="inferred from homology"/>
<feature type="chain" id="PRO_1000083552" description="HTH-type transcriptional regulator BetI">
    <location>
        <begin position="1"/>
        <end position="198"/>
    </location>
</feature>
<feature type="domain" description="HTH tetR-type" evidence="2">
    <location>
        <begin position="8"/>
        <end position="68"/>
    </location>
</feature>
<feature type="DNA-binding region" description="H-T-H motif" evidence="2">
    <location>
        <begin position="31"/>
        <end position="50"/>
    </location>
</feature>
<reference key="1">
    <citation type="submission" date="2007-12" db="EMBL/GenBank/DDBJ databases">
        <title>Brucella suis ATCC 23445 whole genome shotgun sequencing project.</title>
        <authorList>
            <person name="Setubal J.C."/>
            <person name="Bowns C."/>
            <person name="Boyle S."/>
            <person name="Crasta O.R."/>
            <person name="Czar M.J."/>
            <person name="Dharmanolla C."/>
            <person name="Gillespie J.J."/>
            <person name="Kenyon R.W."/>
            <person name="Lu J."/>
            <person name="Mane S."/>
            <person name="Mohapatra S."/>
            <person name="Nagrani S."/>
            <person name="Purkayastha A."/>
            <person name="Rajasimha H.K."/>
            <person name="Shallom J.M."/>
            <person name="Shallom S."/>
            <person name="Shukla M."/>
            <person name="Snyder E.E."/>
            <person name="Sobral B.W."/>
            <person name="Wattam A.R."/>
            <person name="Will R."/>
            <person name="Williams K."/>
            <person name="Yoo H."/>
            <person name="Bruce D."/>
            <person name="Detter C."/>
            <person name="Munk C."/>
            <person name="Brettin T.S."/>
        </authorList>
    </citation>
    <scope>NUCLEOTIDE SEQUENCE [LARGE SCALE GENOMIC DNA]</scope>
    <source>
        <strain>ATCC 23445 / NCTC 10510</strain>
    </source>
</reference>
<keyword id="KW-0238">DNA-binding</keyword>
<keyword id="KW-0678">Repressor</keyword>
<keyword id="KW-0804">Transcription</keyword>
<keyword id="KW-0805">Transcription regulation</keyword>
<comment type="function">
    <text evidence="1">Repressor involved in the biosynthesis of the osmoprotectant glycine betaine. It represses transcription of the choline transporter BetT and the genes of BetAB involved in the synthesis of glycine betaine (By similarity).</text>
</comment>
<comment type="pathway">
    <text>Amine and polyamine biosynthesis; betaine biosynthesis via choline pathway [regulation].</text>
</comment>
<dbReference type="EMBL" id="CP000911">
    <property type="protein sequence ID" value="ABY37665.1"/>
    <property type="molecule type" value="Genomic_DNA"/>
</dbReference>
<dbReference type="RefSeq" id="WP_006072344.1">
    <property type="nucleotide sequence ID" value="NC_010169.1"/>
</dbReference>
<dbReference type="SMR" id="B0CKN5"/>
<dbReference type="KEGG" id="bmt:BSUIS_A0582"/>
<dbReference type="HOGENOM" id="CLU_069356_15_4_5"/>
<dbReference type="UniPathway" id="UPA00529"/>
<dbReference type="Proteomes" id="UP000008545">
    <property type="component" value="Chromosome I"/>
</dbReference>
<dbReference type="GO" id="GO:0003700">
    <property type="term" value="F:DNA-binding transcription factor activity"/>
    <property type="evidence" value="ECO:0007669"/>
    <property type="project" value="UniProtKB-UniRule"/>
</dbReference>
<dbReference type="GO" id="GO:0000976">
    <property type="term" value="F:transcription cis-regulatory region binding"/>
    <property type="evidence" value="ECO:0007669"/>
    <property type="project" value="TreeGrafter"/>
</dbReference>
<dbReference type="GO" id="GO:0019285">
    <property type="term" value="P:glycine betaine biosynthetic process from choline"/>
    <property type="evidence" value="ECO:0007669"/>
    <property type="project" value="UniProtKB-UniRule"/>
</dbReference>
<dbReference type="GO" id="GO:0045892">
    <property type="term" value="P:negative regulation of DNA-templated transcription"/>
    <property type="evidence" value="ECO:0007669"/>
    <property type="project" value="UniProtKB-UniRule"/>
</dbReference>
<dbReference type="Gene3D" id="1.10.357.10">
    <property type="entry name" value="Tetracycline Repressor, domain 2"/>
    <property type="match status" value="1"/>
</dbReference>
<dbReference type="HAMAP" id="MF_00768">
    <property type="entry name" value="HTH_type_BetI"/>
    <property type="match status" value="1"/>
</dbReference>
<dbReference type="InterPro" id="IPR039538">
    <property type="entry name" value="BetI_C"/>
</dbReference>
<dbReference type="InterPro" id="IPR023772">
    <property type="entry name" value="DNA-bd_HTH_TetR-type_CS"/>
</dbReference>
<dbReference type="InterPro" id="IPR009057">
    <property type="entry name" value="Homeodomain-like_sf"/>
</dbReference>
<dbReference type="InterPro" id="IPR050109">
    <property type="entry name" value="HTH-type_TetR-like_transc_reg"/>
</dbReference>
<dbReference type="InterPro" id="IPR001647">
    <property type="entry name" value="HTH_TetR"/>
</dbReference>
<dbReference type="InterPro" id="IPR036271">
    <property type="entry name" value="Tet_transcr_reg_TetR-rel_C_sf"/>
</dbReference>
<dbReference type="InterPro" id="IPR017757">
    <property type="entry name" value="Tscrpt_rep_BetI"/>
</dbReference>
<dbReference type="NCBIfam" id="TIGR03384">
    <property type="entry name" value="betaine_BetI"/>
    <property type="match status" value="1"/>
</dbReference>
<dbReference type="NCBIfam" id="NF001978">
    <property type="entry name" value="PRK00767.1"/>
    <property type="match status" value="1"/>
</dbReference>
<dbReference type="PANTHER" id="PTHR30055:SF234">
    <property type="entry name" value="HTH-TYPE TRANSCRIPTIONAL REGULATOR BETI"/>
    <property type="match status" value="1"/>
</dbReference>
<dbReference type="PANTHER" id="PTHR30055">
    <property type="entry name" value="HTH-TYPE TRANSCRIPTIONAL REGULATOR RUTR"/>
    <property type="match status" value="1"/>
</dbReference>
<dbReference type="Pfam" id="PF13977">
    <property type="entry name" value="TetR_C_6"/>
    <property type="match status" value="1"/>
</dbReference>
<dbReference type="Pfam" id="PF00440">
    <property type="entry name" value="TetR_N"/>
    <property type="match status" value="1"/>
</dbReference>
<dbReference type="PRINTS" id="PR00455">
    <property type="entry name" value="HTHTETR"/>
</dbReference>
<dbReference type="SUPFAM" id="SSF46689">
    <property type="entry name" value="Homeodomain-like"/>
    <property type="match status" value="1"/>
</dbReference>
<dbReference type="SUPFAM" id="SSF48498">
    <property type="entry name" value="Tetracyclin repressor-like, C-terminal domain"/>
    <property type="match status" value="1"/>
</dbReference>
<dbReference type="PROSITE" id="PS01081">
    <property type="entry name" value="HTH_TETR_1"/>
    <property type="match status" value="1"/>
</dbReference>
<dbReference type="PROSITE" id="PS50977">
    <property type="entry name" value="HTH_TETR_2"/>
    <property type="match status" value="1"/>
</dbReference>
<evidence type="ECO:0000250" key="1"/>
<evidence type="ECO:0000255" key="2">
    <source>
        <dbReference type="HAMAP-Rule" id="MF_00768"/>
    </source>
</evidence>
<gene>
    <name evidence="2" type="primary">betI</name>
    <name type="ordered locus">BSUIS_A0582</name>
</gene>
<protein>
    <recommendedName>
        <fullName evidence="2">HTH-type transcriptional regulator BetI</fullName>
    </recommendedName>
</protein>
<organism>
    <name type="scientific">Brucella suis (strain ATCC 23445 / NCTC 10510)</name>
    <dbReference type="NCBI Taxonomy" id="470137"/>
    <lineage>
        <taxon>Bacteria</taxon>
        <taxon>Pseudomonadati</taxon>
        <taxon>Pseudomonadota</taxon>
        <taxon>Alphaproteobacteria</taxon>
        <taxon>Hyphomicrobiales</taxon>
        <taxon>Brucellaceae</taxon>
        <taxon>Brucella/Ochrobactrum group</taxon>
        <taxon>Brucella</taxon>
    </lineage>
</organism>
<name>BETI_BRUSI</name>